<accession>P67289</accession>
<accession>Q92C47</accession>
<sequence length="79" mass="9171">MWIYILVGIICLLAGLAGGFFIARRYMMSYLKNNPPINEQMLQMMMAQMGQKPSQKKINQMMSAMNKQQEKEKPKKAKK</sequence>
<organism>
    <name type="scientific">Listeria innocua serovar 6a (strain ATCC BAA-680 / CLIP 11262)</name>
    <dbReference type="NCBI Taxonomy" id="272626"/>
    <lineage>
        <taxon>Bacteria</taxon>
        <taxon>Bacillati</taxon>
        <taxon>Bacillota</taxon>
        <taxon>Bacilli</taxon>
        <taxon>Bacillales</taxon>
        <taxon>Listeriaceae</taxon>
        <taxon>Listeria</taxon>
    </lineage>
</organism>
<feature type="chain" id="PRO_0000214964" description="UPF0154 protein lin1344">
    <location>
        <begin position="1"/>
        <end position="79"/>
    </location>
</feature>
<feature type="transmembrane region" description="Helical" evidence="1">
    <location>
        <begin position="2"/>
        <end position="22"/>
    </location>
</feature>
<feature type="region of interest" description="Disordered" evidence="2">
    <location>
        <begin position="57"/>
        <end position="79"/>
    </location>
</feature>
<feature type="compositionally biased region" description="Polar residues" evidence="2">
    <location>
        <begin position="57"/>
        <end position="66"/>
    </location>
</feature>
<keyword id="KW-0472">Membrane</keyword>
<keyword id="KW-0812">Transmembrane</keyword>
<keyword id="KW-1133">Transmembrane helix</keyword>
<dbReference type="EMBL" id="AL596168">
    <property type="protein sequence ID" value="CAC96575.1"/>
    <property type="molecule type" value="Genomic_DNA"/>
</dbReference>
<dbReference type="PIR" id="AG1600">
    <property type="entry name" value="AG1600"/>
</dbReference>
<dbReference type="RefSeq" id="WP_003723442.1">
    <property type="nucleotide sequence ID" value="NC_003212.1"/>
</dbReference>
<dbReference type="SMR" id="P67289"/>
<dbReference type="STRING" id="272626.gene:17565675"/>
<dbReference type="KEGG" id="lin:lin1344"/>
<dbReference type="eggNOG" id="COG3763">
    <property type="taxonomic scope" value="Bacteria"/>
</dbReference>
<dbReference type="HOGENOM" id="CLU_180108_0_1_9"/>
<dbReference type="Proteomes" id="UP000002513">
    <property type="component" value="Chromosome"/>
</dbReference>
<dbReference type="GO" id="GO:0005886">
    <property type="term" value="C:plasma membrane"/>
    <property type="evidence" value="ECO:0007669"/>
    <property type="project" value="UniProtKB-UniRule"/>
</dbReference>
<dbReference type="HAMAP" id="MF_00363">
    <property type="entry name" value="UPF0154"/>
    <property type="match status" value="1"/>
</dbReference>
<dbReference type="InterPro" id="IPR005359">
    <property type="entry name" value="UPF0154"/>
</dbReference>
<dbReference type="NCBIfam" id="NF002503">
    <property type="entry name" value="PRK01844.1"/>
    <property type="match status" value="1"/>
</dbReference>
<dbReference type="Pfam" id="PF03672">
    <property type="entry name" value="UPF0154"/>
    <property type="match status" value="1"/>
</dbReference>
<proteinExistence type="inferred from homology"/>
<protein>
    <recommendedName>
        <fullName evidence="1">UPF0154 protein lin1344</fullName>
    </recommendedName>
</protein>
<gene>
    <name type="ordered locus">lin1344</name>
</gene>
<comment type="subcellular location">
    <subcellularLocation>
        <location evidence="1">Membrane</location>
        <topology evidence="1">Single-pass membrane protein</topology>
    </subcellularLocation>
</comment>
<comment type="similarity">
    <text evidence="1">Belongs to the UPF0154 family.</text>
</comment>
<evidence type="ECO:0000255" key="1">
    <source>
        <dbReference type="HAMAP-Rule" id="MF_00363"/>
    </source>
</evidence>
<evidence type="ECO:0000256" key="2">
    <source>
        <dbReference type="SAM" id="MobiDB-lite"/>
    </source>
</evidence>
<name>Y1344_LISIN</name>
<reference key="1">
    <citation type="journal article" date="2001" name="Science">
        <title>Comparative genomics of Listeria species.</title>
        <authorList>
            <person name="Glaser P."/>
            <person name="Frangeul L."/>
            <person name="Buchrieser C."/>
            <person name="Rusniok C."/>
            <person name="Amend A."/>
            <person name="Baquero F."/>
            <person name="Berche P."/>
            <person name="Bloecker H."/>
            <person name="Brandt P."/>
            <person name="Chakraborty T."/>
            <person name="Charbit A."/>
            <person name="Chetouani F."/>
            <person name="Couve E."/>
            <person name="de Daruvar A."/>
            <person name="Dehoux P."/>
            <person name="Domann E."/>
            <person name="Dominguez-Bernal G."/>
            <person name="Duchaud E."/>
            <person name="Durant L."/>
            <person name="Dussurget O."/>
            <person name="Entian K.-D."/>
            <person name="Fsihi H."/>
            <person name="Garcia-del Portillo F."/>
            <person name="Garrido P."/>
            <person name="Gautier L."/>
            <person name="Goebel W."/>
            <person name="Gomez-Lopez N."/>
            <person name="Hain T."/>
            <person name="Hauf J."/>
            <person name="Jackson D."/>
            <person name="Jones L.-M."/>
            <person name="Kaerst U."/>
            <person name="Kreft J."/>
            <person name="Kuhn M."/>
            <person name="Kunst F."/>
            <person name="Kurapkat G."/>
            <person name="Madueno E."/>
            <person name="Maitournam A."/>
            <person name="Mata Vicente J."/>
            <person name="Ng E."/>
            <person name="Nedjari H."/>
            <person name="Nordsiek G."/>
            <person name="Novella S."/>
            <person name="de Pablos B."/>
            <person name="Perez-Diaz J.-C."/>
            <person name="Purcell R."/>
            <person name="Remmel B."/>
            <person name="Rose M."/>
            <person name="Schlueter T."/>
            <person name="Simoes N."/>
            <person name="Tierrez A."/>
            <person name="Vazquez-Boland J.-A."/>
            <person name="Voss H."/>
            <person name="Wehland J."/>
            <person name="Cossart P."/>
        </authorList>
    </citation>
    <scope>NUCLEOTIDE SEQUENCE [LARGE SCALE GENOMIC DNA]</scope>
    <source>
        <strain>ATCC BAA-680 / CLIP 11262</strain>
    </source>
</reference>